<accession>B5QZK6</accession>
<evidence type="ECO:0000250" key="1"/>
<evidence type="ECO:0000250" key="2">
    <source>
        <dbReference type="UniProtKB" id="Q8ZNR3"/>
    </source>
</evidence>
<evidence type="ECO:0000256" key="3">
    <source>
        <dbReference type="SAM" id="MobiDB-lite"/>
    </source>
</evidence>
<evidence type="ECO:0000305" key="4"/>
<dbReference type="EC" id="2.3.2.26"/>
<dbReference type="EMBL" id="AM933172">
    <property type="protein sequence ID" value="CAR33644.1"/>
    <property type="molecule type" value="Genomic_DNA"/>
</dbReference>
<dbReference type="RefSeq" id="WP_000703991.1">
    <property type="nucleotide sequence ID" value="NC_011294.1"/>
</dbReference>
<dbReference type="SMR" id="B5QZK6"/>
<dbReference type="KEGG" id="set:SEN2065"/>
<dbReference type="HOGENOM" id="CLU_026158_0_0_6"/>
<dbReference type="Proteomes" id="UP000000613">
    <property type="component" value="Chromosome"/>
</dbReference>
<dbReference type="GO" id="GO:0005576">
    <property type="term" value="C:extracellular region"/>
    <property type="evidence" value="ECO:0000250"/>
    <property type="project" value="UniProtKB"/>
</dbReference>
<dbReference type="GO" id="GO:0043657">
    <property type="term" value="C:host cell"/>
    <property type="evidence" value="ECO:0007669"/>
    <property type="project" value="UniProtKB-SubCell"/>
</dbReference>
<dbReference type="GO" id="GO:0004842">
    <property type="term" value="F:ubiquitin-protein transferase activity"/>
    <property type="evidence" value="ECO:0000250"/>
    <property type="project" value="UniProtKB"/>
</dbReference>
<dbReference type="GO" id="GO:0016567">
    <property type="term" value="P:protein ubiquitination"/>
    <property type="evidence" value="ECO:0000250"/>
    <property type="project" value="UniProtKB"/>
</dbReference>
<dbReference type="FunFam" id="1.25.40.300:FF:000001">
    <property type="entry name" value="SPI-1 type III secretion system effector HECT-type E3 ubiquitin transferase SopA"/>
    <property type="match status" value="1"/>
</dbReference>
<dbReference type="FunFam" id="2.160.20.80:FF:000005">
    <property type="entry name" value="SPI-1 type III secretion system effector HECT-type E3 ubiquitin transferase SopA"/>
    <property type="match status" value="1"/>
</dbReference>
<dbReference type="Gene3D" id="2.160.20.80">
    <property type="entry name" value="E3 ubiquitin-protein ligase SopA"/>
    <property type="match status" value="1"/>
</dbReference>
<dbReference type="Gene3D" id="1.10.4140.10">
    <property type="entry name" value="effector protein (NleL)"/>
    <property type="match status" value="1"/>
</dbReference>
<dbReference type="Gene3D" id="3.40.1850.10">
    <property type="entry name" value="HECT-like ubiquitin ligase"/>
    <property type="match status" value="1"/>
</dbReference>
<dbReference type="Gene3D" id="1.25.40.300">
    <property type="entry name" value="Putative secreted effector protein"/>
    <property type="match status" value="1"/>
</dbReference>
<dbReference type="InterPro" id="IPR025725">
    <property type="entry name" value="SopA-like_cat"/>
</dbReference>
<dbReference type="InterPro" id="IPR038270">
    <property type="entry name" value="SopA-like_catalytic_sf"/>
</dbReference>
<dbReference type="InterPro" id="IPR025726">
    <property type="entry name" value="SopA-like_central"/>
</dbReference>
<dbReference type="NCBIfam" id="NF011904">
    <property type="entry name" value="PRK15377.1"/>
    <property type="match status" value="1"/>
</dbReference>
<dbReference type="Pfam" id="PF13981">
    <property type="entry name" value="SopA"/>
    <property type="match status" value="1"/>
</dbReference>
<dbReference type="Pfam" id="PF13979">
    <property type="entry name" value="SopA_C"/>
    <property type="match status" value="1"/>
</dbReference>
<dbReference type="SUPFAM" id="SSF141571">
    <property type="entry name" value="Pentapeptide repeat-like"/>
    <property type="match status" value="1"/>
</dbReference>
<proteinExistence type="inferred from homology"/>
<name>SOPA_SALEP</name>
<sequence length="782" mass="86692">MKISSGAINFSTIPNQVKKLITSIREHTKNGLASKITSVKNTHASLNEKLKTGKSSSIEFALPQKIKDFFQPKDKNTLNKTLITVKNIKDTNNAGKKNISAEDVSKMNAAFMRKHIANQTCDYNYRMTGAAPLPGGVSVSANNRPTVSEGRTPPVSPSLSLQATSSPSSPADWAKKLTDAVLRQKAGETLTAADRDFSNADFRNITFSKILPPSFMERDGDIIKGFNFSNSKFTYSDISHLHFDECRFTYSTLSDVVCSNTKFSNSDMNEVFLQYSITTQQQPSFIDTTLKNTLIRHKANLSGVILNEPDNSSPPSVSGGGNFIRLGDIWLQMPLLWTENAVDGFLNHEHNNGKSILMTIDSLPDKYSQEKVQAMEDLVKSLRGGRLTEACIRPVESSLVSVLAHPPYTQSALIREWLGPVQERFFAHQCQTYNDVPLPTPDTYYQQRILPVLLDSFDRNSAAMTTHSGLFNQVILHCMTGVDCTDGTRQKAAALYEQYLAHPAVSPHIHNGLFGNYDGSPDWTTRAADNFLLLSSQDSDTAMMLSTDTLLTMLNPTPDTAWDNFYLLRAGENVSTAQISPVELFRHDFPVFLAAFNQQATQRRFGELIDIILSTEEHGELNQQFIAATNQKHSTVKLIDDASVSRLATIFAPLLPEGKLSPAHYQHILSAYHLTDATPQKQAETLFCLSTAFARYSSSAIFGTEHDSPPALRGYAEALMQKAWELSPAIFPSSEQFTDWSDRFHGLHGAFTCTSVVADSMQRHARKYFPSVLSSILPLAWA</sequence>
<keyword id="KW-0964">Secreted</keyword>
<keyword id="KW-0808">Transferase</keyword>
<keyword id="KW-0832">Ubl conjugation</keyword>
<keyword id="KW-0833">Ubl conjugation pathway</keyword>
<keyword id="KW-0843">Virulence</keyword>
<gene>
    <name type="primary">sopA</name>
    <name type="ordered locus">SEN2065</name>
</gene>
<feature type="chain" id="PRO_0000395852" description="E3 ubiquitin-protein ligase SopA">
    <location>
        <begin position="1"/>
        <end position="782"/>
    </location>
</feature>
<feature type="region of interest" description="Disordered" evidence="3">
    <location>
        <begin position="137"/>
        <end position="171"/>
    </location>
</feature>
<feature type="compositionally biased region" description="Low complexity" evidence="3">
    <location>
        <begin position="157"/>
        <end position="171"/>
    </location>
</feature>
<feature type="active site" description="Glycyl thioester intermediate" evidence="1">
    <location>
        <position position="753"/>
    </location>
</feature>
<comment type="function">
    <text evidence="2">Effector proteins function to alter host cell physiology and promote bacterial survival in host tissues. This protein is an E3 ubiquitin ligase that interferes with host's ubiquitination pathway.</text>
</comment>
<comment type="catalytic activity">
    <reaction>
        <text>S-ubiquitinyl-[E2 ubiquitin-conjugating enzyme]-L-cysteine + [acceptor protein]-L-lysine = [E2 ubiquitin-conjugating enzyme]-L-cysteine + N(6)-ubiquitinyl-[acceptor protein]-L-lysine.</text>
        <dbReference type="EC" id="2.3.2.26"/>
    </reaction>
</comment>
<comment type="subcellular location">
    <subcellularLocation>
        <location evidence="2">Secreted</location>
    </subcellularLocation>
    <subcellularLocation>
        <location evidence="2">Host cell</location>
    </subcellularLocation>
    <text evidence="2">Secreted via type III secretion system 1 (SPI-1 T3SS), and delivered into the host cell.</text>
</comment>
<comment type="PTM">
    <text evidence="2">Ubiquitinated in the presence of host E1 ubiquitin-activating enzyme, E2 ubiquitin-conjugating enzyme and ubiquitin.</text>
</comment>
<comment type="similarity">
    <text evidence="4">Belongs to the SopA E3 ligase family.</text>
</comment>
<organism>
    <name type="scientific">Salmonella enteritidis PT4 (strain P125109)</name>
    <dbReference type="NCBI Taxonomy" id="550537"/>
    <lineage>
        <taxon>Bacteria</taxon>
        <taxon>Pseudomonadati</taxon>
        <taxon>Pseudomonadota</taxon>
        <taxon>Gammaproteobacteria</taxon>
        <taxon>Enterobacterales</taxon>
        <taxon>Enterobacteriaceae</taxon>
        <taxon>Salmonella</taxon>
    </lineage>
</organism>
<protein>
    <recommendedName>
        <fullName>E3 ubiquitin-protein ligase SopA</fullName>
        <ecNumber>2.3.2.26</ecNumber>
    </recommendedName>
    <alternativeName>
        <fullName evidence="4">HECT-type E3 ubiquitin transferase SopA</fullName>
    </alternativeName>
    <alternativeName>
        <fullName>Salmonella outer protein A</fullName>
    </alternativeName>
    <alternativeName>
        <fullName>Secreted effector protein SopA</fullName>
    </alternativeName>
</protein>
<reference key="1">
    <citation type="journal article" date="2008" name="Genome Res.">
        <title>Comparative genome analysis of Salmonella enteritidis PT4 and Salmonella gallinarum 287/91 provides insights into evolutionary and host adaptation pathways.</title>
        <authorList>
            <person name="Thomson N.R."/>
            <person name="Clayton D.J."/>
            <person name="Windhorst D."/>
            <person name="Vernikos G."/>
            <person name="Davidson S."/>
            <person name="Churcher C."/>
            <person name="Quail M.A."/>
            <person name="Stevens M."/>
            <person name="Jones M.A."/>
            <person name="Watson M."/>
            <person name="Barron A."/>
            <person name="Layton A."/>
            <person name="Pickard D."/>
            <person name="Kingsley R.A."/>
            <person name="Bignell A."/>
            <person name="Clark L."/>
            <person name="Harris B."/>
            <person name="Ormond D."/>
            <person name="Abdellah Z."/>
            <person name="Brooks K."/>
            <person name="Cherevach I."/>
            <person name="Chillingworth T."/>
            <person name="Woodward J."/>
            <person name="Norberczak H."/>
            <person name="Lord A."/>
            <person name="Arrowsmith C."/>
            <person name="Jagels K."/>
            <person name="Moule S."/>
            <person name="Mungall K."/>
            <person name="Saunders M."/>
            <person name="Whitehead S."/>
            <person name="Chabalgoity J.A."/>
            <person name="Maskell D."/>
            <person name="Humphreys T."/>
            <person name="Roberts M."/>
            <person name="Barrow P.A."/>
            <person name="Dougan G."/>
            <person name="Parkhill J."/>
        </authorList>
    </citation>
    <scope>NUCLEOTIDE SEQUENCE [LARGE SCALE GENOMIC DNA]</scope>
    <source>
        <strain>P125109</strain>
    </source>
</reference>